<sequence>MDYKTKKNSNATVDIKLTFEASDIEKAFDKTYEEKQKNVKIPGFRPGKAPLNMVKRHLGDSVASDAINTLIVDGMTSILSKLEHPMIRFPKFEIQDYQPGKNLIATAIYETNPEITLGKYKKIKIKLPEVSVSDLDVSEEVEKVRKNLARKQLKEEGQAAVAGDIIDMEYTVCEKGQESKNSGNTSNDYHLGHENNLKGFDENLYGMKSGEKKDFVHTFPEDYSQNEVAGKTFEYSVTIKALYANILPAVDDDLASEFDGSESLNVLKDKIRKNLKEGFEDRVKNKKLDEIYKEIIDDSKYVFPESYLREESEHVFHNMIHEFKLPHMTMEKYANMVQKDLKEVQESFQKLAETRLKHYFTRQKIAEIENISYSEQDFDADLEKLASSYQISLSDLKKELEKGKLMEQYRENFFAKKIDNILFDLVEKKYTDKLNIGQIKDYLNQKEEVKA</sequence>
<evidence type="ECO:0000255" key="1">
    <source>
        <dbReference type="HAMAP-Rule" id="MF_00303"/>
    </source>
</evidence>
<name>TIG_LEPIN</name>
<feature type="chain" id="PRO_0000179374" description="Trigger factor">
    <location>
        <begin position="1"/>
        <end position="451"/>
    </location>
</feature>
<feature type="domain" description="PPIase FKBP-type" evidence="1">
    <location>
        <begin position="163"/>
        <end position="248"/>
    </location>
</feature>
<organism>
    <name type="scientific">Leptospira interrogans serogroup Icterohaemorrhagiae serovar Lai (strain 56601)</name>
    <dbReference type="NCBI Taxonomy" id="189518"/>
    <lineage>
        <taxon>Bacteria</taxon>
        <taxon>Pseudomonadati</taxon>
        <taxon>Spirochaetota</taxon>
        <taxon>Spirochaetia</taxon>
        <taxon>Leptospirales</taxon>
        <taxon>Leptospiraceae</taxon>
        <taxon>Leptospira</taxon>
    </lineage>
</organism>
<accession>Q8F351</accession>
<reference key="1">
    <citation type="journal article" date="2003" name="Nature">
        <title>Unique physiological and pathogenic features of Leptospira interrogans revealed by whole-genome sequencing.</title>
        <authorList>
            <person name="Ren S.-X."/>
            <person name="Fu G."/>
            <person name="Jiang X.-G."/>
            <person name="Zeng R."/>
            <person name="Miao Y.-G."/>
            <person name="Xu H."/>
            <person name="Zhang Y.-X."/>
            <person name="Xiong H."/>
            <person name="Lu G."/>
            <person name="Lu L.-F."/>
            <person name="Jiang H.-Q."/>
            <person name="Jia J."/>
            <person name="Tu Y.-F."/>
            <person name="Jiang J.-X."/>
            <person name="Gu W.-Y."/>
            <person name="Zhang Y.-Q."/>
            <person name="Cai Z."/>
            <person name="Sheng H.-H."/>
            <person name="Yin H.-F."/>
            <person name="Zhang Y."/>
            <person name="Zhu G.-F."/>
            <person name="Wan M."/>
            <person name="Huang H.-L."/>
            <person name="Qian Z."/>
            <person name="Wang S.-Y."/>
            <person name="Ma W."/>
            <person name="Yao Z.-J."/>
            <person name="Shen Y."/>
            <person name="Qiang B.-Q."/>
            <person name="Xia Q.-C."/>
            <person name="Guo X.-K."/>
            <person name="Danchin A."/>
            <person name="Saint Girons I."/>
            <person name="Somerville R.L."/>
            <person name="Wen Y.-M."/>
            <person name="Shi M.-H."/>
            <person name="Chen Z."/>
            <person name="Xu J.-G."/>
            <person name="Zhao G.-P."/>
        </authorList>
    </citation>
    <scope>NUCLEOTIDE SEQUENCE [LARGE SCALE GENOMIC DNA]</scope>
    <source>
        <strain>56601</strain>
    </source>
</reference>
<protein>
    <recommendedName>
        <fullName evidence="1">Trigger factor</fullName>
        <shortName evidence="1">TF</shortName>
        <ecNumber evidence="1">5.2.1.8</ecNumber>
    </recommendedName>
    <alternativeName>
        <fullName evidence="1">PPIase</fullName>
    </alternativeName>
</protein>
<dbReference type="EC" id="5.2.1.8" evidence="1"/>
<dbReference type="EMBL" id="AE010300">
    <property type="protein sequence ID" value="AAN49759.1"/>
    <property type="molecule type" value="Genomic_DNA"/>
</dbReference>
<dbReference type="RefSeq" id="NP_712741.1">
    <property type="nucleotide sequence ID" value="NC_004342.2"/>
</dbReference>
<dbReference type="RefSeq" id="WP_000384982.1">
    <property type="nucleotide sequence ID" value="NC_004342.2"/>
</dbReference>
<dbReference type="SMR" id="Q8F351"/>
<dbReference type="FunCoup" id="Q8F351">
    <property type="interactions" value="563"/>
</dbReference>
<dbReference type="STRING" id="189518.LA_2560"/>
<dbReference type="PaxDb" id="189518-LA_2560"/>
<dbReference type="EnsemblBacteria" id="AAN49759">
    <property type="protein sequence ID" value="AAN49759"/>
    <property type="gene ID" value="LA_2560"/>
</dbReference>
<dbReference type="GeneID" id="61144719"/>
<dbReference type="KEGG" id="lil:LA_2560"/>
<dbReference type="PATRIC" id="fig|189518.3.peg.2545"/>
<dbReference type="HOGENOM" id="CLU_033058_3_2_12"/>
<dbReference type="InParanoid" id="Q8F351"/>
<dbReference type="OrthoDB" id="9767721at2"/>
<dbReference type="Proteomes" id="UP000001408">
    <property type="component" value="Chromosome I"/>
</dbReference>
<dbReference type="GO" id="GO:0005737">
    <property type="term" value="C:cytoplasm"/>
    <property type="evidence" value="ECO:0007669"/>
    <property type="project" value="UniProtKB-SubCell"/>
</dbReference>
<dbReference type="GO" id="GO:0003755">
    <property type="term" value="F:peptidyl-prolyl cis-trans isomerase activity"/>
    <property type="evidence" value="ECO:0000318"/>
    <property type="project" value="GO_Central"/>
</dbReference>
<dbReference type="GO" id="GO:0044183">
    <property type="term" value="F:protein folding chaperone"/>
    <property type="evidence" value="ECO:0000318"/>
    <property type="project" value="GO_Central"/>
</dbReference>
<dbReference type="GO" id="GO:0043022">
    <property type="term" value="F:ribosome binding"/>
    <property type="evidence" value="ECO:0000318"/>
    <property type="project" value="GO_Central"/>
</dbReference>
<dbReference type="GO" id="GO:0051083">
    <property type="term" value="P:'de novo' cotranslational protein folding"/>
    <property type="evidence" value="ECO:0000318"/>
    <property type="project" value="GO_Central"/>
</dbReference>
<dbReference type="GO" id="GO:0051301">
    <property type="term" value="P:cell division"/>
    <property type="evidence" value="ECO:0007669"/>
    <property type="project" value="UniProtKB-KW"/>
</dbReference>
<dbReference type="GO" id="GO:0061077">
    <property type="term" value="P:chaperone-mediated protein folding"/>
    <property type="evidence" value="ECO:0000318"/>
    <property type="project" value="GO_Central"/>
</dbReference>
<dbReference type="GO" id="GO:0015031">
    <property type="term" value="P:protein transport"/>
    <property type="evidence" value="ECO:0007669"/>
    <property type="project" value="UniProtKB-UniRule"/>
</dbReference>
<dbReference type="GO" id="GO:0043335">
    <property type="term" value="P:protein unfolding"/>
    <property type="evidence" value="ECO:0000318"/>
    <property type="project" value="GO_Central"/>
</dbReference>
<dbReference type="FunFam" id="3.30.70.1050:FF:000008">
    <property type="entry name" value="Trigger factor"/>
    <property type="match status" value="1"/>
</dbReference>
<dbReference type="Gene3D" id="3.10.50.40">
    <property type="match status" value="1"/>
</dbReference>
<dbReference type="Gene3D" id="3.30.70.1050">
    <property type="entry name" value="Trigger factor ribosome-binding domain"/>
    <property type="match status" value="1"/>
</dbReference>
<dbReference type="Gene3D" id="1.10.3120.10">
    <property type="entry name" value="Trigger factor, C-terminal domain"/>
    <property type="match status" value="1"/>
</dbReference>
<dbReference type="HAMAP" id="MF_00303">
    <property type="entry name" value="Trigger_factor_Tig"/>
    <property type="match status" value="1"/>
</dbReference>
<dbReference type="InterPro" id="IPR046357">
    <property type="entry name" value="PPIase_dom_sf"/>
</dbReference>
<dbReference type="InterPro" id="IPR001179">
    <property type="entry name" value="PPIase_FKBP_dom"/>
</dbReference>
<dbReference type="InterPro" id="IPR005215">
    <property type="entry name" value="Trig_fac"/>
</dbReference>
<dbReference type="InterPro" id="IPR008880">
    <property type="entry name" value="Trigger_fac_C"/>
</dbReference>
<dbReference type="InterPro" id="IPR037041">
    <property type="entry name" value="Trigger_fac_C_sf"/>
</dbReference>
<dbReference type="InterPro" id="IPR008881">
    <property type="entry name" value="Trigger_fac_ribosome-bd_bac"/>
</dbReference>
<dbReference type="InterPro" id="IPR036611">
    <property type="entry name" value="Trigger_fac_ribosome-bd_sf"/>
</dbReference>
<dbReference type="InterPro" id="IPR027304">
    <property type="entry name" value="Trigger_fact/SurA_dom_sf"/>
</dbReference>
<dbReference type="NCBIfam" id="TIGR00115">
    <property type="entry name" value="tig"/>
    <property type="match status" value="1"/>
</dbReference>
<dbReference type="PANTHER" id="PTHR30560">
    <property type="entry name" value="TRIGGER FACTOR CHAPERONE AND PEPTIDYL-PROLYL CIS/TRANS ISOMERASE"/>
    <property type="match status" value="1"/>
</dbReference>
<dbReference type="PANTHER" id="PTHR30560:SF3">
    <property type="entry name" value="TRIGGER FACTOR-LIKE PROTEIN TIG, CHLOROPLASTIC"/>
    <property type="match status" value="1"/>
</dbReference>
<dbReference type="Pfam" id="PF00254">
    <property type="entry name" value="FKBP_C"/>
    <property type="match status" value="1"/>
</dbReference>
<dbReference type="Pfam" id="PF05698">
    <property type="entry name" value="Trigger_C"/>
    <property type="match status" value="1"/>
</dbReference>
<dbReference type="Pfam" id="PF05697">
    <property type="entry name" value="Trigger_N"/>
    <property type="match status" value="1"/>
</dbReference>
<dbReference type="PIRSF" id="PIRSF003095">
    <property type="entry name" value="Trigger_factor"/>
    <property type="match status" value="1"/>
</dbReference>
<dbReference type="SUPFAM" id="SSF54534">
    <property type="entry name" value="FKBP-like"/>
    <property type="match status" value="1"/>
</dbReference>
<dbReference type="SUPFAM" id="SSF109998">
    <property type="entry name" value="Triger factor/SurA peptide-binding domain-like"/>
    <property type="match status" value="1"/>
</dbReference>
<dbReference type="SUPFAM" id="SSF102735">
    <property type="entry name" value="Trigger factor ribosome-binding domain"/>
    <property type="match status" value="1"/>
</dbReference>
<gene>
    <name evidence="1" type="primary">tig</name>
    <name type="ordered locus">LA_2560</name>
</gene>
<comment type="function">
    <text evidence="1">Involved in protein export. Acts as a chaperone by maintaining the newly synthesized protein in an open conformation. Functions as a peptidyl-prolyl cis-trans isomerase.</text>
</comment>
<comment type="catalytic activity">
    <reaction evidence="1">
        <text>[protein]-peptidylproline (omega=180) = [protein]-peptidylproline (omega=0)</text>
        <dbReference type="Rhea" id="RHEA:16237"/>
        <dbReference type="Rhea" id="RHEA-COMP:10747"/>
        <dbReference type="Rhea" id="RHEA-COMP:10748"/>
        <dbReference type="ChEBI" id="CHEBI:83833"/>
        <dbReference type="ChEBI" id="CHEBI:83834"/>
        <dbReference type="EC" id="5.2.1.8"/>
    </reaction>
</comment>
<comment type="subcellular location">
    <subcellularLocation>
        <location>Cytoplasm</location>
    </subcellularLocation>
    <text evidence="1">About half TF is bound to the ribosome near the polypeptide exit tunnel while the other half is free in the cytoplasm.</text>
</comment>
<comment type="domain">
    <text evidence="1">Consists of 3 domains; the N-terminus binds the ribosome, the middle domain has PPIase activity, while the C-terminus has intrinsic chaperone activity on its own.</text>
</comment>
<comment type="similarity">
    <text evidence="1">Belongs to the FKBP-type PPIase family. Tig subfamily.</text>
</comment>
<proteinExistence type="inferred from homology"/>
<keyword id="KW-0131">Cell cycle</keyword>
<keyword id="KW-0132">Cell division</keyword>
<keyword id="KW-0143">Chaperone</keyword>
<keyword id="KW-0963">Cytoplasm</keyword>
<keyword id="KW-0413">Isomerase</keyword>
<keyword id="KW-1185">Reference proteome</keyword>
<keyword id="KW-0697">Rotamase</keyword>